<name>TILS_HYDCU</name>
<proteinExistence type="inferred from homology"/>
<organism>
    <name type="scientific">Hydrogenovibrio crunogenus (strain DSM 25203 / XCL-2)</name>
    <name type="common">Thiomicrospira crunogena</name>
    <dbReference type="NCBI Taxonomy" id="317025"/>
    <lineage>
        <taxon>Bacteria</taxon>
        <taxon>Pseudomonadati</taxon>
        <taxon>Pseudomonadota</taxon>
        <taxon>Gammaproteobacteria</taxon>
        <taxon>Thiotrichales</taxon>
        <taxon>Piscirickettsiaceae</taxon>
        <taxon>Hydrogenovibrio</taxon>
    </lineage>
</organism>
<keyword id="KW-0067">ATP-binding</keyword>
<keyword id="KW-0963">Cytoplasm</keyword>
<keyword id="KW-0436">Ligase</keyword>
<keyword id="KW-0547">Nucleotide-binding</keyword>
<keyword id="KW-0819">tRNA processing</keyword>
<gene>
    <name evidence="1" type="primary">tilS</name>
    <name type="ordered locus">Tcr_1263</name>
</gene>
<comment type="function">
    <text evidence="1">Ligates lysine onto the cytidine present at position 34 of the AUA codon-specific tRNA(Ile) that contains the anticodon CAU, in an ATP-dependent manner. Cytidine is converted to lysidine, thus changing the amino acid specificity of the tRNA from methionine to isoleucine.</text>
</comment>
<comment type="catalytic activity">
    <reaction evidence="1">
        <text>cytidine(34) in tRNA(Ile2) + L-lysine + ATP = lysidine(34) in tRNA(Ile2) + AMP + diphosphate + H(+)</text>
        <dbReference type="Rhea" id="RHEA:43744"/>
        <dbReference type="Rhea" id="RHEA-COMP:10625"/>
        <dbReference type="Rhea" id="RHEA-COMP:10670"/>
        <dbReference type="ChEBI" id="CHEBI:15378"/>
        <dbReference type="ChEBI" id="CHEBI:30616"/>
        <dbReference type="ChEBI" id="CHEBI:32551"/>
        <dbReference type="ChEBI" id="CHEBI:33019"/>
        <dbReference type="ChEBI" id="CHEBI:82748"/>
        <dbReference type="ChEBI" id="CHEBI:83665"/>
        <dbReference type="ChEBI" id="CHEBI:456215"/>
        <dbReference type="EC" id="6.3.4.19"/>
    </reaction>
</comment>
<comment type="subcellular location">
    <subcellularLocation>
        <location evidence="1">Cytoplasm</location>
    </subcellularLocation>
</comment>
<comment type="domain">
    <text>The N-terminal region contains the highly conserved SGGXDS motif, predicted to be a P-loop motif involved in ATP binding.</text>
</comment>
<comment type="similarity">
    <text evidence="1">Belongs to the tRNA(Ile)-lysidine synthase family.</text>
</comment>
<dbReference type="EC" id="6.3.4.19" evidence="1"/>
<dbReference type="EMBL" id="CP000109">
    <property type="protein sequence ID" value="ABB41858.1"/>
    <property type="molecule type" value="Genomic_DNA"/>
</dbReference>
<dbReference type="SMR" id="Q31G65"/>
<dbReference type="STRING" id="317025.Tcr_1263"/>
<dbReference type="KEGG" id="tcx:Tcr_1263"/>
<dbReference type="eggNOG" id="COG0037">
    <property type="taxonomic scope" value="Bacteria"/>
</dbReference>
<dbReference type="HOGENOM" id="CLU_018869_2_0_6"/>
<dbReference type="OrthoDB" id="9807403at2"/>
<dbReference type="GO" id="GO:0005737">
    <property type="term" value="C:cytoplasm"/>
    <property type="evidence" value="ECO:0007669"/>
    <property type="project" value="UniProtKB-SubCell"/>
</dbReference>
<dbReference type="GO" id="GO:0005524">
    <property type="term" value="F:ATP binding"/>
    <property type="evidence" value="ECO:0007669"/>
    <property type="project" value="UniProtKB-UniRule"/>
</dbReference>
<dbReference type="GO" id="GO:0032267">
    <property type="term" value="F:tRNA(Ile)-lysidine synthase activity"/>
    <property type="evidence" value="ECO:0007669"/>
    <property type="project" value="UniProtKB-EC"/>
</dbReference>
<dbReference type="GO" id="GO:0006400">
    <property type="term" value="P:tRNA modification"/>
    <property type="evidence" value="ECO:0007669"/>
    <property type="project" value="UniProtKB-UniRule"/>
</dbReference>
<dbReference type="CDD" id="cd01992">
    <property type="entry name" value="TilS_N"/>
    <property type="match status" value="1"/>
</dbReference>
<dbReference type="Gene3D" id="3.40.50.620">
    <property type="entry name" value="HUPs"/>
    <property type="match status" value="1"/>
</dbReference>
<dbReference type="HAMAP" id="MF_01161">
    <property type="entry name" value="tRNA_Ile_lys_synt"/>
    <property type="match status" value="1"/>
</dbReference>
<dbReference type="InterPro" id="IPR012796">
    <property type="entry name" value="Lysidine-tRNA-synth_C"/>
</dbReference>
<dbReference type="InterPro" id="IPR014729">
    <property type="entry name" value="Rossmann-like_a/b/a_fold"/>
</dbReference>
<dbReference type="InterPro" id="IPR011063">
    <property type="entry name" value="TilS/TtcA_N"/>
</dbReference>
<dbReference type="InterPro" id="IPR012094">
    <property type="entry name" value="tRNA_Ile_lys_synt"/>
</dbReference>
<dbReference type="InterPro" id="IPR012795">
    <property type="entry name" value="tRNA_Ile_lys_synt_N"/>
</dbReference>
<dbReference type="NCBIfam" id="TIGR02433">
    <property type="entry name" value="lysidine_TilS_C"/>
    <property type="match status" value="1"/>
</dbReference>
<dbReference type="NCBIfam" id="TIGR02432">
    <property type="entry name" value="lysidine_TilS_N"/>
    <property type="match status" value="1"/>
</dbReference>
<dbReference type="PANTHER" id="PTHR43033">
    <property type="entry name" value="TRNA(ILE)-LYSIDINE SYNTHASE-RELATED"/>
    <property type="match status" value="1"/>
</dbReference>
<dbReference type="PANTHER" id="PTHR43033:SF1">
    <property type="entry name" value="TRNA(ILE)-LYSIDINE SYNTHASE-RELATED"/>
    <property type="match status" value="1"/>
</dbReference>
<dbReference type="Pfam" id="PF01171">
    <property type="entry name" value="ATP_bind_3"/>
    <property type="match status" value="1"/>
</dbReference>
<dbReference type="Pfam" id="PF11734">
    <property type="entry name" value="TilS_C"/>
    <property type="match status" value="1"/>
</dbReference>
<dbReference type="SUPFAM" id="SSF52402">
    <property type="entry name" value="Adenine nucleotide alpha hydrolases-like"/>
    <property type="match status" value="1"/>
</dbReference>
<dbReference type="SUPFAM" id="SSF56037">
    <property type="entry name" value="PheT/TilS domain"/>
    <property type="match status" value="1"/>
</dbReference>
<evidence type="ECO:0000255" key="1">
    <source>
        <dbReference type="HAMAP-Rule" id="MF_01161"/>
    </source>
</evidence>
<accession>Q31G65</accession>
<protein>
    <recommendedName>
        <fullName evidence="1">tRNA(Ile)-lysidine synthase</fullName>
        <ecNumber evidence="1">6.3.4.19</ecNumber>
    </recommendedName>
    <alternativeName>
        <fullName evidence="1">tRNA(Ile)-2-lysyl-cytidine synthase</fullName>
    </alternativeName>
    <alternativeName>
        <fullName evidence="1">tRNA(Ile)-lysidine synthetase</fullName>
    </alternativeName>
</protein>
<sequence length="420" mass="48521">MSYQKVELAISKLIHLYPSPVQFLVAFSGGLDSTVMLDALCKHVSPQSIHAVYINHGLQPESNQWADACKKACERLGVKFESVDVQVSDISRQGIEAVARQKRYEALYSRVTKGTILLTAHHQRDQAETLLLNMARGAGISGLSGMPYVKNIQLNEQTLQHCRPLLNVDYDAIQSYAKQYRLDWVEDSSNQELDYRRNYLRHEVLPKIRHAWPFSDANFAKSAHHLNESLALLNELAEIDLQHTDYTDFYLSFTNVKELRWSRLKNMTRYWTESYVSGLRLNAKIYQWLQECLNNKNPQAKPKMLLARGELRFYNHVLYYFDDLKVHYCLAFDEFDASALQLFKALDFSEQLSSKQGGKLEGTVVRPLNPNDLSSGSQKKALKKWFKESKVPEWDRQRWPVLEKEGQVVAILGFYTKKSF</sequence>
<reference key="1">
    <citation type="journal article" date="2006" name="PLoS Biol.">
        <title>The genome of deep-sea vent chemolithoautotroph Thiomicrospira crunogena XCL-2.</title>
        <authorList>
            <person name="Scott K.M."/>
            <person name="Sievert S.M."/>
            <person name="Abril F.N."/>
            <person name="Ball L.A."/>
            <person name="Barrett C.J."/>
            <person name="Blake R.A."/>
            <person name="Boller A.J."/>
            <person name="Chain P.S.G."/>
            <person name="Clark J.A."/>
            <person name="Davis C.R."/>
            <person name="Detter C."/>
            <person name="Do K.F."/>
            <person name="Dobrinski K.P."/>
            <person name="Faza B.I."/>
            <person name="Fitzpatrick K.A."/>
            <person name="Freyermuth S.K."/>
            <person name="Harmer T.L."/>
            <person name="Hauser L.J."/>
            <person name="Huegler M."/>
            <person name="Kerfeld C.A."/>
            <person name="Klotz M.G."/>
            <person name="Kong W.W."/>
            <person name="Land M."/>
            <person name="Lapidus A."/>
            <person name="Larimer F.W."/>
            <person name="Longo D.L."/>
            <person name="Lucas S."/>
            <person name="Malfatti S.A."/>
            <person name="Massey S.E."/>
            <person name="Martin D.D."/>
            <person name="McCuddin Z."/>
            <person name="Meyer F."/>
            <person name="Moore J.L."/>
            <person name="Ocampo L.H. Jr."/>
            <person name="Paul J.H."/>
            <person name="Paulsen I.T."/>
            <person name="Reep D.K."/>
            <person name="Ren Q."/>
            <person name="Ross R.L."/>
            <person name="Sato P.Y."/>
            <person name="Thomas P."/>
            <person name="Tinkham L.E."/>
            <person name="Zeruth G.T."/>
        </authorList>
    </citation>
    <scope>NUCLEOTIDE SEQUENCE [LARGE SCALE GENOMIC DNA]</scope>
    <source>
        <strain>DSM 25203 / XCL-2</strain>
    </source>
</reference>
<feature type="chain" id="PRO_1000085374" description="tRNA(Ile)-lysidine synthase">
    <location>
        <begin position="1"/>
        <end position="420"/>
    </location>
</feature>
<feature type="binding site" evidence="1">
    <location>
        <begin position="28"/>
        <end position="33"/>
    </location>
    <ligand>
        <name>ATP</name>
        <dbReference type="ChEBI" id="CHEBI:30616"/>
    </ligand>
</feature>